<feature type="chain" id="PRO_1000012433" description="3-phosphoshikimate 1-carboxyvinyltransferase">
    <location>
        <begin position="1"/>
        <end position="428"/>
    </location>
</feature>
<feature type="active site" description="Proton acceptor" evidence="1">
    <location>
        <position position="314"/>
    </location>
</feature>
<feature type="binding site" evidence="1">
    <location>
        <position position="23"/>
    </location>
    <ligand>
        <name>3-phosphoshikimate</name>
        <dbReference type="ChEBI" id="CHEBI:145989"/>
    </ligand>
</feature>
<feature type="binding site" evidence="1">
    <location>
        <position position="23"/>
    </location>
    <ligand>
        <name>phosphoenolpyruvate</name>
        <dbReference type="ChEBI" id="CHEBI:58702"/>
    </ligand>
</feature>
<feature type="binding site" evidence="1">
    <location>
        <position position="24"/>
    </location>
    <ligand>
        <name>3-phosphoshikimate</name>
        <dbReference type="ChEBI" id="CHEBI:145989"/>
    </ligand>
</feature>
<feature type="binding site" evidence="1">
    <location>
        <position position="28"/>
    </location>
    <ligand>
        <name>3-phosphoshikimate</name>
        <dbReference type="ChEBI" id="CHEBI:145989"/>
    </ligand>
</feature>
<feature type="binding site" evidence="1">
    <location>
        <position position="97"/>
    </location>
    <ligand>
        <name>phosphoenolpyruvate</name>
        <dbReference type="ChEBI" id="CHEBI:58702"/>
    </ligand>
</feature>
<feature type="binding site" evidence="1">
    <location>
        <position position="125"/>
    </location>
    <ligand>
        <name>phosphoenolpyruvate</name>
        <dbReference type="ChEBI" id="CHEBI:58702"/>
    </ligand>
</feature>
<feature type="binding site" evidence="1">
    <location>
        <position position="170"/>
    </location>
    <ligand>
        <name>3-phosphoshikimate</name>
        <dbReference type="ChEBI" id="CHEBI:145989"/>
    </ligand>
</feature>
<feature type="binding site" evidence="1">
    <location>
        <position position="171"/>
    </location>
    <ligand>
        <name>3-phosphoshikimate</name>
        <dbReference type="ChEBI" id="CHEBI:145989"/>
    </ligand>
</feature>
<feature type="binding site" evidence="1">
    <location>
        <position position="172"/>
    </location>
    <ligand>
        <name>3-phosphoshikimate</name>
        <dbReference type="ChEBI" id="CHEBI:145989"/>
    </ligand>
</feature>
<feature type="binding site" evidence="1">
    <location>
        <position position="172"/>
    </location>
    <ligand>
        <name>phosphoenolpyruvate</name>
        <dbReference type="ChEBI" id="CHEBI:58702"/>
    </ligand>
</feature>
<feature type="binding site" evidence="1">
    <location>
        <position position="198"/>
    </location>
    <ligand>
        <name>3-phosphoshikimate</name>
        <dbReference type="ChEBI" id="CHEBI:145989"/>
    </ligand>
</feature>
<feature type="binding site" evidence="1">
    <location>
        <position position="314"/>
    </location>
    <ligand>
        <name>3-phosphoshikimate</name>
        <dbReference type="ChEBI" id="CHEBI:145989"/>
    </ligand>
</feature>
<feature type="binding site" evidence="1">
    <location>
        <position position="337"/>
    </location>
    <ligand>
        <name>3-phosphoshikimate</name>
        <dbReference type="ChEBI" id="CHEBI:145989"/>
    </ligand>
</feature>
<feature type="binding site" evidence="1">
    <location>
        <position position="341"/>
    </location>
    <ligand>
        <name>3-phosphoshikimate</name>
        <dbReference type="ChEBI" id="CHEBI:145989"/>
    </ligand>
</feature>
<feature type="binding site" evidence="1">
    <location>
        <position position="345"/>
    </location>
    <ligand>
        <name>phosphoenolpyruvate</name>
        <dbReference type="ChEBI" id="CHEBI:58702"/>
    </ligand>
</feature>
<feature type="binding site" evidence="1">
    <location>
        <position position="387"/>
    </location>
    <ligand>
        <name>phosphoenolpyruvate</name>
        <dbReference type="ChEBI" id="CHEBI:58702"/>
    </ligand>
</feature>
<feature type="binding site" evidence="1">
    <location>
        <position position="412"/>
    </location>
    <ligand>
        <name>phosphoenolpyruvate</name>
        <dbReference type="ChEBI" id="CHEBI:58702"/>
    </ligand>
</feature>
<keyword id="KW-0028">Amino-acid biosynthesis</keyword>
<keyword id="KW-0057">Aromatic amino acid biosynthesis</keyword>
<keyword id="KW-0963">Cytoplasm</keyword>
<keyword id="KW-1185">Reference proteome</keyword>
<keyword id="KW-0808">Transferase</keyword>
<protein>
    <recommendedName>
        <fullName evidence="1">3-phosphoshikimate 1-carboxyvinyltransferase</fullName>
        <ecNumber evidence="1">2.5.1.19</ecNumber>
    </recommendedName>
    <alternativeName>
        <fullName evidence="1">5-enolpyruvylshikimate-3-phosphate synthase</fullName>
        <shortName evidence="1">EPSP synthase</shortName>
        <shortName evidence="1">EPSPS</shortName>
    </alternativeName>
</protein>
<name>AROA_CROS8</name>
<proteinExistence type="inferred from homology"/>
<evidence type="ECO:0000255" key="1">
    <source>
        <dbReference type="HAMAP-Rule" id="MF_00210"/>
    </source>
</evidence>
<dbReference type="EC" id="2.5.1.19" evidence="1"/>
<dbReference type="EMBL" id="CP000783">
    <property type="protein sequence ID" value="ABU77682.1"/>
    <property type="molecule type" value="Genomic_DNA"/>
</dbReference>
<dbReference type="RefSeq" id="WP_012125215.1">
    <property type="nucleotide sequence ID" value="NC_009778.1"/>
</dbReference>
<dbReference type="SMR" id="A7MES7"/>
<dbReference type="KEGG" id="esa:ESA_02436"/>
<dbReference type="PATRIC" id="fig|290339.8.peg.2165"/>
<dbReference type="HOGENOM" id="CLU_024321_0_0_6"/>
<dbReference type="UniPathway" id="UPA00053">
    <property type="reaction ID" value="UER00089"/>
</dbReference>
<dbReference type="Proteomes" id="UP000000260">
    <property type="component" value="Chromosome"/>
</dbReference>
<dbReference type="GO" id="GO:0005737">
    <property type="term" value="C:cytoplasm"/>
    <property type="evidence" value="ECO:0007669"/>
    <property type="project" value="UniProtKB-SubCell"/>
</dbReference>
<dbReference type="GO" id="GO:0003866">
    <property type="term" value="F:3-phosphoshikimate 1-carboxyvinyltransferase activity"/>
    <property type="evidence" value="ECO:0007669"/>
    <property type="project" value="UniProtKB-UniRule"/>
</dbReference>
<dbReference type="GO" id="GO:0008652">
    <property type="term" value="P:amino acid biosynthetic process"/>
    <property type="evidence" value="ECO:0007669"/>
    <property type="project" value="UniProtKB-KW"/>
</dbReference>
<dbReference type="GO" id="GO:0009073">
    <property type="term" value="P:aromatic amino acid family biosynthetic process"/>
    <property type="evidence" value="ECO:0007669"/>
    <property type="project" value="UniProtKB-KW"/>
</dbReference>
<dbReference type="GO" id="GO:0009423">
    <property type="term" value="P:chorismate biosynthetic process"/>
    <property type="evidence" value="ECO:0007669"/>
    <property type="project" value="UniProtKB-UniRule"/>
</dbReference>
<dbReference type="CDD" id="cd01556">
    <property type="entry name" value="EPSP_synthase"/>
    <property type="match status" value="1"/>
</dbReference>
<dbReference type="FunFam" id="3.65.10.10:FF:000003">
    <property type="entry name" value="3-phosphoshikimate 1-carboxyvinyltransferase"/>
    <property type="match status" value="1"/>
</dbReference>
<dbReference type="FunFam" id="3.65.10.10:FF:000004">
    <property type="entry name" value="3-phosphoshikimate 1-carboxyvinyltransferase"/>
    <property type="match status" value="1"/>
</dbReference>
<dbReference type="Gene3D" id="3.65.10.10">
    <property type="entry name" value="Enolpyruvate transferase domain"/>
    <property type="match status" value="2"/>
</dbReference>
<dbReference type="HAMAP" id="MF_00210">
    <property type="entry name" value="EPSP_synth"/>
    <property type="match status" value="1"/>
</dbReference>
<dbReference type="InterPro" id="IPR001986">
    <property type="entry name" value="Enolpyruvate_Tfrase_dom"/>
</dbReference>
<dbReference type="InterPro" id="IPR036968">
    <property type="entry name" value="Enolpyruvate_Tfrase_sf"/>
</dbReference>
<dbReference type="InterPro" id="IPR006264">
    <property type="entry name" value="EPSP_synthase"/>
</dbReference>
<dbReference type="InterPro" id="IPR023193">
    <property type="entry name" value="EPSP_synthase_CS"/>
</dbReference>
<dbReference type="InterPro" id="IPR013792">
    <property type="entry name" value="RNA3'P_cycl/enolpyr_Trfase_a/b"/>
</dbReference>
<dbReference type="NCBIfam" id="TIGR01356">
    <property type="entry name" value="aroA"/>
    <property type="match status" value="1"/>
</dbReference>
<dbReference type="PANTHER" id="PTHR21090">
    <property type="entry name" value="AROM/DEHYDROQUINATE SYNTHASE"/>
    <property type="match status" value="1"/>
</dbReference>
<dbReference type="PANTHER" id="PTHR21090:SF5">
    <property type="entry name" value="PENTAFUNCTIONAL AROM POLYPEPTIDE"/>
    <property type="match status" value="1"/>
</dbReference>
<dbReference type="Pfam" id="PF00275">
    <property type="entry name" value="EPSP_synthase"/>
    <property type="match status" value="1"/>
</dbReference>
<dbReference type="PIRSF" id="PIRSF000505">
    <property type="entry name" value="EPSPS"/>
    <property type="match status" value="1"/>
</dbReference>
<dbReference type="SUPFAM" id="SSF55205">
    <property type="entry name" value="EPT/RTPC-like"/>
    <property type="match status" value="1"/>
</dbReference>
<dbReference type="PROSITE" id="PS00104">
    <property type="entry name" value="EPSP_SYNTHASE_1"/>
    <property type="match status" value="1"/>
</dbReference>
<dbReference type="PROSITE" id="PS00885">
    <property type="entry name" value="EPSP_SYNTHASE_2"/>
    <property type="match status" value="1"/>
</dbReference>
<accession>A7MES7</accession>
<organism>
    <name type="scientific">Cronobacter sakazakii (strain ATCC BAA-894)</name>
    <name type="common">Enterobacter sakazakii</name>
    <dbReference type="NCBI Taxonomy" id="290339"/>
    <lineage>
        <taxon>Bacteria</taxon>
        <taxon>Pseudomonadati</taxon>
        <taxon>Pseudomonadota</taxon>
        <taxon>Gammaproteobacteria</taxon>
        <taxon>Enterobacterales</taxon>
        <taxon>Enterobacteriaceae</taxon>
        <taxon>Cronobacter</taxon>
    </lineage>
</organism>
<reference key="1">
    <citation type="journal article" date="2010" name="PLoS ONE">
        <title>Genome sequence of Cronobacter sakazakii BAA-894 and comparative genomic hybridization analysis with other Cronobacter species.</title>
        <authorList>
            <person name="Kucerova E."/>
            <person name="Clifton S.W."/>
            <person name="Xia X.Q."/>
            <person name="Long F."/>
            <person name="Porwollik S."/>
            <person name="Fulton L."/>
            <person name="Fronick C."/>
            <person name="Minx P."/>
            <person name="Kyung K."/>
            <person name="Warren W."/>
            <person name="Fulton R."/>
            <person name="Feng D."/>
            <person name="Wollam A."/>
            <person name="Shah N."/>
            <person name="Bhonagiri V."/>
            <person name="Nash W.E."/>
            <person name="Hallsworth-Pepin K."/>
            <person name="Wilson R.K."/>
            <person name="McClelland M."/>
            <person name="Forsythe S.J."/>
        </authorList>
    </citation>
    <scope>NUCLEOTIDE SEQUENCE [LARGE SCALE GENOMIC DNA]</scope>
    <source>
        <strain>ATCC BAA-894</strain>
    </source>
</reference>
<sequence>MQESLTLQPIARVDGTINLPGSKSVSNRALLLAALAKGTTTLTNLLDSDDVRHMLNALNALGVHYSLSDDRTRCEIQGQGGPFNTLVELELFLGNAGTAMRPLAAALCLGTNNVVLTGEPRMKERPIGHLVDALRQGGADVTYLEQENYPPLHLKGGFTGGNVTVDGSVSSQFLTALLMAAPLAPGNTAIDIKGELVSKPYIDITLHLMKTFGVEVENQNYQRFVIQGGQQYQSPGHYLVEGDASSASYFLAAAAIKGGTVKVTGIGRNSVQGDIRFADVLEKMGAHITWGDDFISCTRGELNAIDMDMNHIPDAAMTIATTALFAKGTTTLRNIYNWRVKETDRLAAMATELRKVGATVEEGHDFITVTPPAQLQFADIGTYNDHRMAMCFSLVALSDTPVTILDPKCTAKTFPNYFAQLARISHSA</sequence>
<gene>
    <name evidence="1" type="primary">aroA</name>
    <name type="ordered locus">ESA_02436</name>
</gene>
<comment type="function">
    <text evidence="1">Catalyzes the transfer of the enolpyruvyl moiety of phosphoenolpyruvate (PEP) to the 5-hydroxyl of shikimate-3-phosphate (S3P) to produce enolpyruvyl shikimate-3-phosphate and inorganic phosphate.</text>
</comment>
<comment type="catalytic activity">
    <reaction evidence="1">
        <text>3-phosphoshikimate + phosphoenolpyruvate = 5-O-(1-carboxyvinyl)-3-phosphoshikimate + phosphate</text>
        <dbReference type="Rhea" id="RHEA:21256"/>
        <dbReference type="ChEBI" id="CHEBI:43474"/>
        <dbReference type="ChEBI" id="CHEBI:57701"/>
        <dbReference type="ChEBI" id="CHEBI:58702"/>
        <dbReference type="ChEBI" id="CHEBI:145989"/>
        <dbReference type="EC" id="2.5.1.19"/>
    </reaction>
    <physiologicalReaction direction="left-to-right" evidence="1">
        <dbReference type="Rhea" id="RHEA:21257"/>
    </physiologicalReaction>
</comment>
<comment type="pathway">
    <text evidence="1">Metabolic intermediate biosynthesis; chorismate biosynthesis; chorismate from D-erythrose 4-phosphate and phosphoenolpyruvate: step 6/7.</text>
</comment>
<comment type="subunit">
    <text evidence="1">Monomer.</text>
</comment>
<comment type="subcellular location">
    <subcellularLocation>
        <location evidence="1">Cytoplasm</location>
    </subcellularLocation>
</comment>
<comment type="similarity">
    <text evidence="1">Belongs to the EPSP synthase family.</text>
</comment>